<comment type="subcellular location">
    <subcellularLocation>
        <location evidence="4">Cell membrane</location>
        <topology evidence="4">Single-pass type I membrane protein</topology>
    </subcellularLocation>
</comment>
<comment type="similarity">
    <text evidence="4">Belongs to the RLP family.</text>
</comment>
<comment type="sequence caution" evidence="4">
    <conflict type="erroneous initiation">
        <sequence resource="EMBL-CDS" id="AAF27043"/>
    </conflict>
    <text>Truncated N-terminus.</text>
</comment>
<dbReference type="EMBL" id="AC009177">
    <property type="protein sequence ID" value="AAF27043.1"/>
    <property type="status" value="ALT_INIT"/>
    <property type="molecule type" value="Genomic_DNA"/>
</dbReference>
<dbReference type="EMBL" id="AC009606">
    <property type="status" value="NOT_ANNOTATED_CDS"/>
    <property type="molecule type" value="Genomic_DNA"/>
</dbReference>
<dbReference type="EMBL" id="CP002686">
    <property type="protein sequence ID" value="AEE74226.1"/>
    <property type="molecule type" value="Genomic_DNA"/>
</dbReference>
<dbReference type="EMBL" id="AY090373">
    <property type="protein sequence ID" value="AAL91276.1"/>
    <property type="molecule type" value="mRNA"/>
</dbReference>
<dbReference type="EMBL" id="BT006359">
    <property type="protein sequence ID" value="AAP21167.1"/>
    <property type="molecule type" value="mRNA"/>
</dbReference>
<dbReference type="RefSeq" id="NP_187188.2">
    <property type="nucleotide sequence ID" value="NM_111410.4"/>
</dbReference>
<dbReference type="SMR" id="Q8RX63"/>
<dbReference type="FunCoup" id="Q8RX63">
    <property type="interactions" value="189"/>
</dbReference>
<dbReference type="STRING" id="3702.Q8RX63"/>
<dbReference type="GlyCosmos" id="Q8RX63">
    <property type="glycosylation" value="22 sites, No reported glycans"/>
</dbReference>
<dbReference type="GlyGen" id="Q8RX63">
    <property type="glycosylation" value="22 sites"/>
</dbReference>
<dbReference type="PaxDb" id="3702-AT3G05370.1"/>
<dbReference type="EnsemblPlants" id="AT3G05370.1">
    <property type="protein sequence ID" value="AT3G05370.1"/>
    <property type="gene ID" value="AT3G05370"/>
</dbReference>
<dbReference type="GeneID" id="819701"/>
<dbReference type="Gramene" id="AT3G05370.1">
    <property type="protein sequence ID" value="AT3G05370.1"/>
    <property type="gene ID" value="AT3G05370"/>
</dbReference>
<dbReference type="KEGG" id="ath:AT3G05370"/>
<dbReference type="Araport" id="AT3G05370"/>
<dbReference type="TAIR" id="AT3G05370">
    <property type="gene designation" value="RLP31"/>
</dbReference>
<dbReference type="eggNOG" id="KOG0619">
    <property type="taxonomic scope" value="Eukaryota"/>
</dbReference>
<dbReference type="HOGENOM" id="CLU_000288_18_3_1"/>
<dbReference type="InParanoid" id="Q8RX63"/>
<dbReference type="OMA" id="QFKNEFH"/>
<dbReference type="PhylomeDB" id="Q8RX63"/>
<dbReference type="PRO" id="PR:Q8RX63"/>
<dbReference type="Proteomes" id="UP000006548">
    <property type="component" value="Chromosome 3"/>
</dbReference>
<dbReference type="ExpressionAtlas" id="Q8RX63">
    <property type="expression patterns" value="baseline and differential"/>
</dbReference>
<dbReference type="GO" id="GO:0005886">
    <property type="term" value="C:plasma membrane"/>
    <property type="evidence" value="ECO:0007669"/>
    <property type="project" value="UniProtKB-SubCell"/>
</dbReference>
<dbReference type="FunFam" id="3.80.10.10:FF:000111">
    <property type="entry name" value="LRR receptor-like serine/threonine-protein kinase ERECTA"/>
    <property type="match status" value="1"/>
</dbReference>
<dbReference type="FunFam" id="3.80.10.10:FF:000095">
    <property type="entry name" value="LRR receptor-like serine/threonine-protein kinase GSO1"/>
    <property type="match status" value="2"/>
</dbReference>
<dbReference type="Gene3D" id="3.80.10.10">
    <property type="entry name" value="Ribonuclease Inhibitor"/>
    <property type="match status" value="3"/>
</dbReference>
<dbReference type="InterPro" id="IPR001611">
    <property type="entry name" value="Leu-rich_rpt"/>
</dbReference>
<dbReference type="InterPro" id="IPR003591">
    <property type="entry name" value="Leu-rich_rpt_typical-subtyp"/>
</dbReference>
<dbReference type="InterPro" id="IPR032675">
    <property type="entry name" value="LRR_dom_sf"/>
</dbReference>
<dbReference type="InterPro" id="IPR013210">
    <property type="entry name" value="LRR_N_plant-typ"/>
</dbReference>
<dbReference type="InterPro" id="IPR055414">
    <property type="entry name" value="LRR_R13L4/SHOC2-like"/>
</dbReference>
<dbReference type="PANTHER" id="PTHR48052:SF8">
    <property type="entry name" value="LRR RECEPTOR-LIKE SERINE_THREONINE-PROTEIN KINASE FLS2"/>
    <property type="match status" value="1"/>
</dbReference>
<dbReference type="PANTHER" id="PTHR48052">
    <property type="entry name" value="UNNAMED PRODUCT"/>
    <property type="match status" value="1"/>
</dbReference>
<dbReference type="Pfam" id="PF00560">
    <property type="entry name" value="LRR_1"/>
    <property type="match status" value="6"/>
</dbReference>
<dbReference type="Pfam" id="PF23598">
    <property type="entry name" value="LRR_14"/>
    <property type="match status" value="1"/>
</dbReference>
<dbReference type="Pfam" id="PF13855">
    <property type="entry name" value="LRR_8"/>
    <property type="match status" value="1"/>
</dbReference>
<dbReference type="Pfam" id="PF08263">
    <property type="entry name" value="LRRNT_2"/>
    <property type="match status" value="1"/>
</dbReference>
<dbReference type="PRINTS" id="PR00019">
    <property type="entry name" value="LEURICHRPT"/>
</dbReference>
<dbReference type="SMART" id="SM00369">
    <property type="entry name" value="LRR_TYP"/>
    <property type="match status" value="7"/>
</dbReference>
<dbReference type="SUPFAM" id="SSF52058">
    <property type="entry name" value="L domain-like"/>
    <property type="match status" value="3"/>
</dbReference>
<name>RLP31_ARATH</name>
<keyword id="KW-1003">Cell membrane</keyword>
<keyword id="KW-0325">Glycoprotein</keyword>
<keyword id="KW-0433">Leucine-rich repeat</keyword>
<keyword id="KW-0472">Membrane</keyword>
<keyword id="KW-0675">Receptor</keyword>
<keyword id="KW-1185">Reference proteome</keyword>
<keyword id="KW-0677">Repeat</keyword>
<keyword id="KW-0732">Signal</keyword>
<keyword id="KW-0812">Transmembrane</keyword>
<keyword id="KW-1133">Transmembrane helix</keyword>
<proteinExistence type="evidence at transcript level"/>
<organism>
    <name type="scientific">Arabidopsis thaliana</name>
    <name type="common">Mouse-ear cress</name>
    <dbReference type="NCBI Taxonomy" id="3702"/>
    <lineage>
        <taxon>Eukaryota</taxon>
        <taxon>Viridiplantae</taxon>
        <taxon>Streptophyta</taxon>
        <taxon>Embryophyta</taxon>
        <taxon>Tracheophyta</taxon>
        <taxon>Spermatophyta</taxon>
        <taxon>Magnoliopsida</taxon>
        <taxon>eudicotyledons</taxon>
        <taxon>Gunneridae</taxon>
        <taxon>Pentapetalae</taxon>
        <taxon>rosids</taxon>
        <taxon>malvids</taxon>
        <taxon>Brassicales</taxon>
        <taxon>Brassicaceae</taxon>
        <taxon>Camelineae</taxon>
        <taxon>Arabidopsis</taxon>
    </lineage>
</organism>
<reference key="1">
    <citation type="journal article" date="2000" name="Nature">
        <title>Sequence and analysis of chromosome 3 of the plant Arabidopsis thaliana.</title>
        <authorList>
            <person name="Salanoubat M."/>
            <person name="Lemcke K."/>
            <person name="Rieger M."/>
            <person name="Ansorge W."/>
            <person name="Unseld M."/>
            <person name="Fartmann B."/>
            <person name="Valle G."/>
            <person name="Bloecker H."/>
            <person name="Perez-Alonso M."/>
            <person name="Obermaier B."/>
            <person name="Delseny M."/>
            <person name="Boutry M."/>
            <person name="Grivell L.A."/>
            <person name="Mache R."/>
            <person name="Puigdomenech P."/>
            <person name="De Simone V."/>
            <person name="Choisne N."/>
            <person name="Artiguenave F."/>
            <person name="Robert C."/>
            <person name="Brottier P."/>
            <person name="Wincker P."/>
            <person name="Cattolico L."/>
            <person name="Weissenbach J."/>
            <person name="Saurin W."/>
            <person name="Quetier F."/>
            <person name="Schaefer M."/>
            <person name="Mueller-Auer S."/>
            <person name="Gabel C."/>
            <person name="Fuchs M."/>
            <person name="Benes V."/>
            <person name="Wurmbach E."/>
            <person name="Drzonek H."/>
            <person name="Erfle H."/>
            <person name="Jordan N."/>
            <person name="Bangert S."/>
            <person name="Wiedelmann R."/>
            <person name="Kranz H."/>
            <person name="Voss H."/>
            <person name="Holland R."/>
            <person name="Brandt P."/>
            <person name="Nyakatura G."/>
            <person name="Vezzi A."/>
            <person name="D'Angelo M."/>
            <person name="Pallavicini A."/>
            <person name="Toppo S."/>
            <person name="Simionati B."/>
            <person name="Conrad A."/>
            <person name="Hornischer K."/>
            <person name="Kauer G."/>
            <person name="Loehnert T.-H."/>
            <person name="Nordsiek G."/>
            <person name="Reichelt J."/>
            <person name="Scharfe M."/>
            <person name="Schoen O."/>
            <person name="Bargues M."/>
            <person name="Terol J."/>
            <person name="Climent J."/>
            <person name="Navarro P."/>
            <person name="Collado C."/>
            <person name="Perez-Perez A."/>
            <person name="Ottenwaelder B."/>
            <person name="Duchemin D."/>
            <person name="Cooke R."/>
            <person name="Laudie M."/>
            <person name="Berger-Llauro C."/>
            <person name="Purnelle B."/>
            <person name="Masuy D."/>
            <person name="de Haan M."/>
            <person name="Maarse A.C."/>
            <person name="Alcaraz J.-P."/>
            <person name="Cottet A."/>
            <person name="Casacuberta E."/>
            <person name="Monfort A."/>
            <person name="Argiriou A."/>
            <person name="Flores M."/>
            <person name="Liguori R."/>
            <person name="Vitale D."/>
            <person name="Mannhaupt G."/>
            <person name="Haase D."/>
            <person name="Schoof H."/>
            <person name="Rudd S."/>
            <person name="Zaccaria P."/>
            <person name="Mewes H.-W."/>
            <person name="Mayer K.F.X."/>
            <person name="Kaul S."/>
            <person name="Town C.D."/>
            <person name="Koo H.L."/>
            <person name="Tallon L.J."/>
            <person name="Jenkins J."/>
            <person name="Rooney T."/>
            <person name="Rizzo M."/>
            <person name="Walts A."/>
            <person name="Utterback T."/>
            <person name="Fujii C.Y."/>
            <person name="Shea T.P."/>
            <person name="Creasy T.H."/>
            <person name="Haas B."/>
            <person name="Maiti R."/>
            <person name="Wu D."/>
            <person name="Peterson J."/>
            <person name="Van Aken S."/>
            <person name="Pai G."/>
            <person name="Militscher J."/>
            <person name="Sellers P."/>
            <person name="Gill J.E."/>
            <person name="Feldblyum T.V."/>
            <person name="Preuss D."/>
            <person name="Lin X."/>
            <person name="Nierman W.C."/>
            <person name="Salzberg S.L."/>
            <person name="White O."/>
            <person name="Venter J.C."/>
            <person name="Fraser C.M."/>
            <person name="Kaneko T."/>
            <person name="Nakamura Y."/>
            <person name="Sato S."/>
            <person name="Kato T."/>
            <person name="Asamizu E."/>
            <person name="Sasamoto S."/>
            <person name="Kimura T."/>
            <person name="Idesawa K."/>
            <person name="Kawashima K."/>
            <person name="Kishida Y."/>
            <person name="Kiyokawa C."/>
            <person name="Kohara M."/>
            <person name="Matsumoto M."/>
            <person name="Matsuno A."/>
            <person name="Muraki A."/>
            <person name="Nakayama S."/>
            <person name="Nakazaki N."/>
            <person name="Shinpo S."/>
            <person name="Takeuchi C."/>
            <person name="Wada T."/>
            <person name="Watanabe A."/>
            <person name="Yamada M."/>
            <person name="Yasuda M."/>
            <person name="Tabata S."/>
        </authorList>
    </citation>
    <scope>NUCLEOTIDE SEQUENCE [LARGE SCALE GENOMIC DNA]</scope>
    <source>
        <strain>cv. Columbia</strain>
    </source>
</reference>
<reference key="2">
    <citation type="journal article" date="2017" name="Plant J.">
        <title>Araport11: a complete reannotation of the Arabidopsis thaliana reference genome.</title>
        <authorList>
            <person name="Cheng C.Y."/>
            <person name="Krishnakumar V."/>
            <person name="Chan A.P."/>
            <person name="Thibaud-Nissen F."/>
            <person name="Schobel S."/>
            <person name="Town C.D."/>
        </authorList>
    </citation>
    <scope>GENOME REANNOTATION</scope>
    <source>
        <strain>cv. Columbia</strain>
    </source>
</reference>
<reference key="3">
    <citation type="journal article" date="2003" name="Science">
        <title>Empirical analysis of transcriptional activity in the Arabidopsis genome.</title>
        <authorList>
            <person name="Yamada K."/>
            <person name="Lim J."/>
            <person name="Dale J.M."/>
            <person name="Chen H."/>
            <person name="Shinn P."/>
            <person name="Palm C.J."/>
            <person name="Southwick A.M."/>
            <person name="Wu H.C."/>
            <person name="Kim C.J."/>
            <person name="Nguyen M."/>
            <person name="Pham P.K."/>
            <person name="Cheuk R.F."/>
            <person name="Karlin-Newmann G."/>
            <person name="Liu S.X."/>
            <person name="Lam B."/>
            <person name="Sakano H."/>
            <person name="Wu T."/>
            <person name="Yu G."/>
            <person name="Miranda M."/>
            <person name="Quach H.L."/>
            <person name="Tripp M."/>
            <person name="Chang C.H."/>
            <person name="Lee J.M."/>
            <person name="Toriumi M.J."/>
            <person name="Chan M.M."/>
            <person name="Tang C.C."/>
            <person name="Onodera C.S."/>
            <person name="Deng J.M."/>
            <person name="Akiyama K."/>
            <person name="Ansari Y."/>
            <person name="Arakawa T."/>
            <person name="Banh J."/>
            <person name="Banno F."/>
            <person name="Bowser L."/>
            <person name="Brooks S.Y."/>
            <person name="Carninci P."/>
            <person name="Chao Q."/>
            <person name="Choy N."/>
            <person name="Enju A."/>
            <person name="Goldsmith A.D."/>
            <person name="Gurjal M."/>
            <person name="Hansen N.F."/>
            <person name="Hayashizaki Y."/>
            <person name="Johnson-Hopson C."/>
            <person name="Hsuan V.W."/>
            <person name="Iida K."/>
            <person name="Karnes M."/>
            <person name="Khan S."/>
            <person name="Koesema E."/>
            <person name="Ishida J."/>
            <person name="Jiang P.X."/>
            <person name="Jones T."/>
            <person name="Kawai J."/>
            <person name="Kamiya A."/>
            <person name="Meyers C."/>
            <person name="Nakajima M."/>
            <person name="Narusaka M."/>
            <person name="Seki M."/>
            <person name="Sakurai T."/>
            <person name="Satou M."/>
            <person name="Tamse R."/>
            <person name="Vaysberg M."/>
            <person name="Wallender E.K."/>
            <person name="Wong C."/>
            <person name="Yamamura Y."/>
            <person name="Yuan S."/>
            <person name="Shinozaki K."/>
            <person name="Davis R.W."/>
            <person name="Theologis A."/>
            <person name="Ecker J.R."/>
        </authorList>
    </citation>
    <scope>NUCLEOTIDE SEQUENCE [LARGE SCALE MRNA]</scope>
    <source>
        <strain>cv. Columbia</strain>
    </source>
</reference>
<reference key="4">
    <citation type="journal article" date="2005" name="Plant Physiol.">
        <title>Phylogenomic analysis of the receptor-like proteins of rice and Arabidopsis.</title>
        <authorList>
            <person name="Fritz-Laylin L.K."/>
            <person name="Krishnamurthy N."/>
            <person name="Toer M."/>
            <person name="Sjoelander K.V."/>
            <person name="Jones J.D."/>
        </authorList>
    </citation>
    <scope>GENE FAMILY</scope>
</reference>
<reference key="5">
    <citation type="journal article" date="2008" name="Plant Physiol.">
        <title>A genome-wide functional investigation into the roles of receptor-like proteins in Arabidopsis.</title>
        <authorList>
            <person name="Wang G."/>
            <person name="Ellendorff U."/>
            <person name="Kemp B."/>
            <person name="Mansfield J.W."/>
            <person name="Forsyth A."/>
            <person name="Mitchell K."/>
            <person name="Bastas K."/>
            <person name="Liu C.-M."/>
            <person name="Woods-Toer A."/>
            <person name="Zipfel C."/>
            <person name="de Wit P.J.G.M."/>
            <person name="Jones J.D.G."/>
            <person name="Toer M."/>
            <person name="Thomma B.P.H.J."/>
        </authorList>
    </citation>
    <scope>GENE FAMILY</scope>
    <scope>NOMENCLATURE</scope>
    <source>
        <strain>cv. Columbia</strain>
    </source>
</reference>
<gene>
    <name evidence="3" type="primary">RLP31</name>
    <name evidence="5" type="ordered locus">At3g05370</name>
    <name evidence="7" type="ORF">F22F7.24</name>
    <name evidence="6" type="ORF">T12H1.34</name>
</gene>
<evidence type="ECO:0000255" key="1"/>
<evidence type="ECO:0000255" key="2">
    <source>
        <dbReference type="PROSITE-ProRule" id="PRU00498"/>
    </source>
</evidence>
<evidence type="ECO:0000303" key="3">
    <source>
    </source>
</evidence>
<evidence type="ECO:0000305" key="4"/>
<evidence type="ECO:0000312" key="5">
    <source>
        <dbReference type="Araport" id="AT3G05370"/>
    </source>
</evidence>
<evidence type="ECO:0000312" key="6">
    <source>
        <dbReference type="EMBL" id="AAF27043.1"/>
    </source>
</evidence>
<evidence type="ECO:0000312" key="7">
    <source>
        <dbReference type="EMBL" id="AC009606"/>
    </source>
</evidence>
<protein>
    <recommendedName>
        <fullName evidence="3">Receptor-like protein 31</fullName>
        <shortName evidence="3">AtRLP31</shortName>
    </recommendedName>
</protein>
<sequence>MMIPSQSCFCFFFMVSFFLHTLASPTLRHCRHDQRNALLEFKHEFPRVNESNQIPYDVSLSSWNKSIDCCSWEGVTCDAISSEVISLNLSHVPLNNSLKPNSGLFKLQHLHNLTLSNCSLYGDIPSSLGNLFRLTLLDLSYNYLVGQVPPSIGNLSRLTILDLWDNKLVGQLPASIGNLTQLEYLIFSHNKFSGNIPVTFSNLTKLLVVNLYNNSFESMLPLDMSGFQNLDYFNVGENSFSGTLPKSLFTIPSLRWANLEGNMFKGPIEFRNMYSPSTRLQYLFLSQNKFDGPIPDTLSQYLNLIELDLSFNNLTGSFPTFLFTIPTLERVNLEGNHLKGPVEFGNMSSSSSLKFLNFAQNEFNGSIPESVSQYLNLEELHLSFNNFIGTIPRSISKLAKLEYFCLEDNNMVGEVPSWLWRLTMVALSNNSFNSFGESSEGLDETQVQWLDLSSNSFQGPFPHWICKLRSLEILIMSDNRFNGSIPPCLSSFMVSLTDLILRNNSLSGPLPDIFVNATKLLSLDVSRNKLDGVLPKSLIHCKAMQLLNVRSNKIKDKFPSWLGSLPSLHVLILRSNEFYGTLYQPHASIGFQSLRVIDVSHNDLIGTLPSFYFSSWREMSRLTGEDGDFRLSEAPYMGKVLNATAFFVDSMEIVNKGVETEFKRINEENKVINFSGNRFSGNIPESIGLLKELRHLNLSSNAFTGNIPQSLANLMKLEALDLSLNQLSGQIPQGLGSLSFMSTMNFSYNFLEGPVPKSTQFQGQNCSAFMENPKLNGLEEICRETDRVPNPKPQESKDLSEPEEHVINWIAAGIAYGPGVVCGLVIGHIFLSHKHECWFMEKFRRKKPKVVTRIARPSKH</sequence>
<feature type="signal peptide" evidence="1">
    <location>
        <begin position="1"/>
        <end position="23"/>
    </location>
</feature>
<feature type="chain" id="PRO_5013535926" description="Receptor-like protein 31">
    <location>
        <begin position="24"/>
        <end position="860"/>
    </location>
</feature>
<feature type="topological domain" description="Extracellular" evidence="1">
    <location>
        <begin position="24"/>
        <end position="809"/>
    </location>
</feature>
<feature type="transmembrane region" description="Helical" evidence="1">
    <location>
        <begin position="810"/>
        <end position="830"/>
    </location>
</feature>
<feature type="topological domain" description="Cytoplasmic" evidence="1">
    <location>
        <begin position="831"/>
        <end position="860"/>
    </location>
</feature>
<feature type="repeat" description="LRR 1" evidence="1">
    <location>
        <begin position="108"/>
        <end position="131"/>
    </location>
</feature>
<feature type="repeat" description="LRR 2" evidence="1">
    <location>
        <begin position="132"/>
        <end position="155"/>
    </location>
</feature>
<feature type="repeat" description="LRR 3" evidence="1">
    <location>
        <begin position="156"/>
        <end position="179"/>
    </location>
</feature>
<feature type="repeat" description="LRR 4" evidence="1">
    <location>
        <begin position="181"/>
        <end position="202"/>
    </location>
</feature>
<feature type="repeat" description="LRR 5" evidence="1">
    <location>
        <begin position="203"/>
        <end position="226"/>
    </location>
</feature>
<feature type="repeat" description="LRR 6" evidence="1">
    <location>
        <begin position="227"/>
        <end position="251"/>
    </location>
</feature>
<feature type="repeat" description="LRR 7; degenerate" evidence="4">
    <location>
        <begin position="252"/>
        <end position="276"/>
    </location>
</feature>
<feature type="repeat" description="LRR 8" evidence="1">
    <location>
        <begin position="277"/>
        <end position="301"/>
    </location>
</feature>
<feature type="repeat" description="LRR 9" evidence="1">
    <location>
        <begin position="302"/>
        <end position="325"/>
    </location>
</feature>
<feature type="repeat" description="LRR 10" evidence="1">
    <location>
        <begin position="326"/>
        <end position="349"/>
    </location>
</feature>
<feature type="repeat" description="LRR 11" evidence="1">
    <location>
        <begin position="350"/>
        <end position="374"/>
    </location>
</feature>
<feature type="repeat" description="LRR 12" evidence="1">
    <location>
        <begin position="376"/>
        <end position="398"/>
    </location>
</feature>
<feature type="repeat" description="LRR 13" evidence="1">
    <location>
        <begin position="400"/>
        <end position="419"/>
    </location>
</feature>
<feature type="repeat" description="LRR 14" evidence="1">
    <location>
        <begin position="420"/>
        <end position="444"/>
    </location>
</feature>
<feature type="repeat" description="LRR 15" evidence="1">
    <location>
        <begin position="446"/>
        <end position="468"/>
    </location>
</feature>
<feature type="repeat" description="LRR 16" evidence="1">
    <location>
        <begin position="469"/>
        <end position="494"/>
    </location>
</feature>
<feature type="repeat" description="LRR 17" evidence="1">
    <location>
        <begin position="496"/>
        <end position="517"/>
    </location>
</feature>
<feature type="repeat" description="LRR 18" evidence="1">
    <location>
        <begin position="518"/>
        <end position="541"/>
    </location>
</feature>
<feature type="repeat" description="LRR 19" evidence="1">
    <location>
        <begin position="543"/>
        <end position="564"/>
    </location>
</feature>
<feature type="repeat" description="LRR 20" evidence="1">
    <location>
        <begin position="565"/>
        <end position="591"/>
    </location>
</feature>
<feature type="repeat" description="LRR 21" evidence="1">
    <location>
        <begin position="592"/>
        <end position="615"/>
    </location>
</feature>
<feature type="repeat" description="LRR 22" evidence="1">
    <location>
        <begin position="665"/>
        <end position="690"/>
    </location>
</feature>
<feature type="repeat" description="LRR 23" evidence="1">
    <location>
        <begin position="691"/>
        <end position="714"/>
    </location>
</feature>
<feature type="repeat" description="LRR 24" evidence="1">
    <location>
        <begin position="716"/>
        <end position="738"/>
    </location>
</feature>
<feature type="repeat" description="LRR 25" evidence="1">
    <location>
        <begin position="740"/>
        <end position="763"/>
    </location>
</feature>
<feature type="glycosylation site" description="N-linked (GlcNAc...) asparagine" evidence="2">
    <location>
        <position position="49"/>
    </location>
</feature>
<feature type="glycosylation site" description="N-linked (GlcNAc...) asparagine" evidence="2">
    <location>
        <position position="64"/>
    </location>
</feature>
<feature type="glycosylation site" description="N-linked (GlcNAc...) asparagine" evidence="2">
    <location>
        <position position="88"/>
    </location>
</feature>
<feature type="glycosylation site" description="N-linked (GlcNAc...) asparagine" evidence="2">
    <location>
        <position position="95"/>
    </location>
</feature>
<feature type="glycosylation site" description="N-linked (GlcNAc...) asparagine" evidence="2">
    <location>
        <position position="112"/>
    </location>
</feature>
<feature type="glycosylation site" description="N-linked (GlcNAc...) asparagine" evidence="2">
    <location>
        <position position="117"/>
    </location>
</feature>
<feature type="glycosylation site" description="N-linked (GlcNAc...) asparagine" evidence="2">
    <location>
        <position position="154"/>
    </location>
</feature>
<feature type="glycosylation site" description="N-linked (GlcNAc...) asparagine" evidence="2">
    <location>
        <position position="178"/>
    </location>
</feature>
<feature type="glycosylation site" description="N-linked (GlcNAc...) asparagine" evidence="2">
    <location>
        <position position="202"/>
    </location>
</feature>
<feature type="glycosylation site" description="N-linked (GlcNAc...) asparagine" evidence="2">
    <location>
        <position position="213"/>
    </location>
</feature>
<feature type="glycosylation site" description="N-linked (GlcNAc...) asparagine" evidence="2">
    <location>
        <position position="313"/>
    </location>
</feature>
<feature type="glycosylation site" description="N-linked (GlcNAc...) asparagine" evidence="2">
    <location>
        <position position="346"/>
    </location>
</feature>
<feature type="glycosylation site" description="N-linked (GlcNAc...) asparagine" evidence="2">
    <location>
        <position position="364"/>
    </location>
</feature>
<feature type="glycosylation site" description="N-linked (GlcNAc...) asparagine" evidence="2">
    <location>
        <position position="429"/>
    </location>
</feature>
<feature type="glycosylation site" description="N-linked (GlcNAc...) asparagine" evidence="2">
    <location>
        <position position="482"/>
    </location>
</feature>
<feature type="glycosylation site" description="N-linked (GlcNAc...) asparagine" evidence="2">
    <location>
        <position position="503"/>
    </location>
</feature>
<feature type="glycosylation site" description="N-linked (GlcNAc...) asparagine" evidence="2">
    <location>
        <position position="516"/>
    </location>
</feature>
<feature type="glycosylation site" description="N-linked (GlcNAc...) asparagine" evidence="2">
    <location>
        <position position="642"/>
    </location>
</feature>
<feature type="glycosylation site" description="N-linked (GlcNAc...) asparagine" evidence="2">
    <location>
        <position position="673"/>
    </location>
</feature>
<feature type="glycosylation site" description="N-linked (GlcNAc...) asparagine" evidence="2">
    <location>
        <position position="697"/>
    </location>
</feature>
<feature type="glycosylation site" description="N-linked (GlcNAc...) asparagine" evidence="2">
    <location>
        <position position="745"/>
    </location>
</feature>
<feature type="glycosylation site" description="N-linked (GlcNAc...) asparagine" evidence="2">
    <location>
        <position position="765"/>
    </location>
</feature>
<accession>Q8RX63</accession>
<accession>Q9MA82</accession>